<evidence type="ECO:0000255" key="1"/>
<evidence type="ECO:0000255" key="2">
    <source>
        <dbReference type="PROSITE-ProRule" id="PRU00498"/>
    </source>
</evidence>
<evidence type="ECO:0000269" key="3">
    <source>
    </source>
</evidence>
<evidence type="ECO:0000303" key="4">
    <source>
    </source>
</evidence>
<evidence type="ECO:0000305" key="5"/>
<gene>
    <name evidence="4" type="primary">DTR1</name>
    <name type="ordered locus">CAGL0M06281g</name>
</gene>
<keyword id="KW-1003">Cell membrane</keyword>
<keyword id="KW-0325">Glycoprotein</keyword>
<keyword id="KW-0472">Membrane</keyword>
<keyword id="KW-1185">Reference proteome</keyword>
<keyword id="KW-0812">Transmembrane</keyword>
<keyword id="KW-1133">Transmembrane helix</keyword>
<keyword id="KW-0813">Transport</keyword>
<keyword id="KW-0843">Virulence</keyword>
<reference key="1">
    <citation type="journal article" date="2004" name="Nature">
        <title>Genome evolution in yeasts.</title>
        <authorList>
            <person name="Dujon B."/>
            <person name="Sherman D."/>
            <person name="Fischer G."/>
            <person name="Durrens P."/>
            <person name="Casaregola S."/>
            <person name="Lafontaine I."/>
            <person name="de Montigny J."/>
            <person name="Marck C."/>
            <person name="Neuveglise C."/>
            <person name="Talla E."/>
            <person name="Goffard N."/>
            <person name="Frangeul L."/>
            <person name="Aigle M."/>
            <person name="Anthouard V."/>
            <person name="Babour A."/>
            <person name="Barbe V."/>
            <person name="Barnay S."/>
            <person name="Blanchin S."/>
            <person name="Beckerich J.-M."/>
            <person name="Beyne E."/>
            <person name="Bleykasten C."/>
            <person name="Boisrame A."/>
            <person name="Boyer J."/>
            <person name="Cattolico L."/>
            <person name="Confanioleri F."/>
            <person name="de Daruvar A."/>
            <person name="Despons L."/>
            <person name="Fabre E."/>
            <person name="Fairhead C."/>
            <person name="Ferry-Dumazet H."/>
            <person name="Groppi A."/>
            <person name="Hantraye F."/>
            <person name="Hennequin C."/>
            <person name="Jauniaux N."/>
            <person name="Joyet P."/>
            <person name="Kachouri R."/>
            <person name="Kerrest A."/>
            <person name="Koszul R."/>
            <person name="Lemaire M."/>
            <person name="Lesur I."/>
            <person name="Ma L."/>
            <person name="Muller H."/>
            <person name="Nicaud J.-M."/>
            <person name="Nikolski M."/>
            <person name="Oztas S."/>
            <person name="Ozier-Kalogeropoulos O."/>
            <person name="Pellenz S."/>
            <person name="Potier S."/>
            <person name="Richard G.-F."/>
            <person name="Straub M.-L."/>
            <person name="Suleau A."/>
            <person name="Swennen D."/>
            <person name="Tekaia F."/>
            <person name="Wesolowski-Louvel M."/>
            <person name="Westhof E."/>
            <person name="Wirth B."/>
            <person name="Zeniou-Meyer M."/>
            <person name="Zivanovic Y."/>
            <person name="Bolotin-Fukuhara M."/>
            <person name="Thierry A."/>
            <person name="Bouchier C."/>
            <person name="Caudron B."/>
            <person name="Scarpelli C."/>
            <person name="Gaillardin C."/>
            <person name="Weissenbach J."/>
            <person name="Wincker P."/>
            <person name="Souciet J.-L."/>
        </authorList>
    </citation>
    <scope>NUCLEOTIDE SEQUENCE [LARGE SCALE GENOMIC DNA]</scope>
    <source>
        <strain>ATCC 2001 / BCRC 20586 / JCM 3761 / NBRC 0622 / NRRL Y-65 / CBS 138</strain>
    </source>
</reference>
<reference key="2">
    <citation type="journal article" date="2017" name="Front. Cell. Infect. Microbiol.">
        <title>A New Determinant of Candida glabrata Virulence: The Acetate Exporter CgDtr1.</title>
        <authorList>
            <person name="Romao D."/>
            <person name="Cavalheiro M."/>
            <person name="Mil-Homens D."/>
            <person name="Santos R."/>
            <person name="Pais P."/>
            <person name="Costa C."/>
            <person name="Takahashi-Nakaguchi A."/>
            <person name="Fialho A.M."/>
            <person name="Chibana H."/>
            <person name="Teixeira M.C."/>
        </authorList>
    </citation>
    <scope>DISRUPTION PHENOTYPE</scope>
    <scope>FUNCTION</scope>
    <scope>SUBCELLULAR LOCATION</scope>
    <scope>INDUCTION</scope>
</reference>
<comment type="function">
    <text evidence="3">Plasma membrane acetic acid exporter, relieving the stress induced upon cells within hemocytes, and thus enabling increased proliferation and virulence against Galleria mellonella larvae. Confers resistance to weak acid and oxidative stress, but not to antifungal drugs (PubMed:29184852).</text>
</comment>
<comment type="subcellular location">
    <subcellularLocation>
        <location evidence="3">Cell membrane</location>
        <topology evidence="1">Multi-pass membrane protein</topology>
    </subcellularLocation>
</comment>
<comment type="induction">
    <text evidence="3">Expression is up-regulated during internalization in hemocytes and in the presence of hydrogen peroxide stress, but surprisingly, down-regulated upon exposure to acetic acid (PubMed:29184852).</text>
</comment>
<comment type="disruption phenotype">
    <text evidence="3">Leads to intracellular accumulation of acetate and decreases the ability to kill Galleria mellonella larvae by decreasing proliferation in the host hemolymph after infection (PubMed:29184852).</text>
</comment>
<comment type="similarity">
    <text evidence="5">Belongs to the major facilitator superfamily. CAR1 family.</text>
</comment>
<feature type="chain" id="PRO_0000443410" description="Multidrug transporter DTR1">
    <location>
        <begin position="1"/>
        <end position="542"/>
    </location>
</feature>
<feature type="transmembrane region" description="Helical" evidence="1">
    <location>
        <begin position="80"/>
        <end position="100"/>
    </location>
</feature>
<feature type="transmembrane region" description="Helical" evidence="1">
    <location>
        <begin position="119"/>
        <end position="139"/>
    </location>
</feature>
<feature type="transmembrane region" description="Helical" evidence="1">
    <location>
        <begin position="146"/>
        <end position="166"/>
    </location>
</feature>
<feature type="transmembrane region" description="Helical" evidence="1">
    <location>
        <begin position="169"/>
        <end position="189"/>
    </location>
</feature>
<feature type="transmembrane region" description="Helical" evidence="1">
    <location>
        <begin position="210"/>
        <end position="230"/>
    </location>
</feature>
<feature type="transmembrane region" description="Helical" evidence="1">
    <location>
        <begin position="237"/>
        <end position="257"/>
    </location>
</feature>
<feature type="transmembrane region" description="Helical" evidence="1">
    <location>
        <begin position="332"/>
        <end position="352"/>
    </location>
</feature>
<feature type="transmembrane region" description="Helical" evidence="1">
    <location>
        <begin position="374"/>
        <end position="394"/>
    </location>
</feature>
<feature type="transmembrane region" description="Helical" evidence="1">
    <location>
        <begin position="419"/>
        <end position="439"/>
    </location>
</feature>
<feature type="transmembrane region" description="Helical" evidence="1">
    <location>
        <begin position="441"/>
        <end position="461"/>
    </location>
</feature>
<feature type="transmembrane region" description="Helical" evidence="1">
    <location>
        <begin position="481"/>
        <end position="501"/>
    </location>
</feature>
<feature type="transmembrane region" description="Helical" evidence="1">
    <location>
        <begin position="511"/>
        <end position="531"/>
    </location>
</feature>
<feature type="glycosylation site" description="N-linked (GlcNAc...) asparagine" evidence="2">
    <location>
        <position position="6"/>
    </location>
</feature>
<feature type="glycosylation site" description="N-linked (GlcNAc...) asparagine" evidence="2">
    <location>
        <position position="46"/>
    </location>
</feature>
<feature type="glycosylation site" description="N-linked (GlcNAc...) asparagine" evidence="2">
    <location>
        <position position="111"/>
    </location>
</feature>
<feature type="glycosylation site" description="N-linked (GlcNAc...) asparagine" evidence="2">
    <location>
        <position position="118"/>
    </location>
</feature>
<feature type="glycosylation site" description="N-linked (GlcNAc...) asparagine" evidence="2">
    <location>
        <position position="274"/>
    </location>
</feature>
<feature type="glycosylation site" description="N-linked (GlcNAc...) asparagine" evidence="2">
    <location>
        <position position="463"/>
    </location>
</feature>
<sequence>MSTSSNTSGECSPFSITDSIVVQATDDNADKILQEVDLSDPNIDKNDTFELRQQVSIKESPLYYLRDIPYSAYTSFQVSLIFLIVIYNGFLGPLAGNVFIPALPLLQKEFNVSETTINATVSVFMATFSISPLFWGALADKGGRKILYIISISLMVIINILLASVPKKIGSLIFLRIIQAFASSSVISLGAGTVADLTPPKDRGKAMAYFMLGPNLGPILAPIIAGLILLDNNNWRWLFGFLCIVSGLGLIMVILLLPETLRCIVGNGDRQWENWSQNENDMSTQPVDFSSPISRWSFVSDIGFLNPITQDSIFKGLYPHPPKFSVWTYLRIMTFPPVILTSIANALLFCTYYSISVTLSHFLATEYSYSNLKIGACYVCPGVCMLLGSQIGGHLSDSMRKSWKKENYNTEYPLEFRLILTVCGVLLAIGGSIGYGWCIQFHYHISAVLVFAGLMAFGLTWCNNTIMTYLSELLSLRVSSAIAVSSFFRNIAAAISSALIAKLCQKMGIGFCFLGLGLINLVSLFSILVLINNRNKWVKDSF</sequence>
<accession>Q6FJH4</accession>
<name>DTR1_CANGA</name>
<organism>
    <name type="scientific">Candida glabrata (strain ATCC 2001 / BCRC 20586 / JCM 3761 / NBRC 0622 / NRRL Y-65 / CBS 138)</name>
    <name type="common">Yeast</name>
    <name type="synonym">Nakaseomyces glabratus</name>
    <dbReference type="NCBI Taxonomy" id="284593"/>
    <lineage>
        <taxon>Eukaryota</taxon>
        <taxon>Fungi</taxon>
        <taxon>Dikarya</taxon>
        <taxon>Ascomycota</taxon>
        <taxon>Saccharomycotina</taxon>
        <taxon>Saccharomycetes</taxon>
        <taxon>Saccharomycetales</taxon>
        <taxon>Saccharomycetaceae</taxon>
        <taxon>Nakaseomyces</taxon>
    </lineage>
</organism>
<dbReference type="EMBL" id="CR380959">
    <property type="protein sequence ID" value="CAG62596.1"/>
    <property type="molecule type" value="Genomic_DNA"/>
</dbReference>
<dbReference type="RefSeq" id="XP_449620.1">
    <property type="nucleotide sequence ID" value="XM_449620.1"/>
</dbReference>
<dbReference type="FunCoup" id="Q6FJH4">
    <property type="interactions" value="37"/>
</dbReference>
<dbReference type="STRING" id="284593.Q6FJH4"/>
<dbReference type="GlyCosmos" id="Q6FJH4">
    <property type="glycosylation" value="6 sites, No reported glycans"/>
</dbReference>
<dbReference type="EnsemblFungi" id="CAGL0M06281g-T">
    <property type="protein sequence ID" value="CAGL0M06281g-T-p1"/>
    <property type="gene ID" value="CAGL0M06281g"/>
</dbReference>
<dbReference type="KEGG" id="cgr:2891668"/>
<dbReference type="CGD" id="CAL0137077">
    <property type="gene designation" value="DTR1"/>
</dbReference>
<dbReference type="VEuPathDB" id="FungiDB:B1J91_M06281g"/>
<dbReference type="VEuPathDB" id="FungiDB:CAGL0M06281g"/>
<dbReference type="eggNOG" id="KOG0255">
    <property type="taxonomic scope" value="Eukaryota"/>
</dbReference>
<dbReference type="HOGENOM" id="CLU_008455_8_7_1"/>
<dbReference type="InParanoid" id="Q6FJH4"/>
<dbReference type="OMA" id="FQAFGSC"/>
<dbReference type="Proteomes" id="UP000002428">
    <property type="component" value="Chromosome M"/>
</dbReference>
<dbReference type="GO" id="GO:0071944">
    <property type="term" value="C:cell periphery"/>
    <property type="evidence" value="ECO:0000314"/>
    <property type="project" value="CGD"/>
</dbReference>
<dbReference type="GO" id="GO:0005886">
    <property type="term" value="C:plasma membrane"/>
    <property type="evidence" value="ECO:0007669"/>
    <property type="project" value="UniProtKB-SubCell"/>
</dbReference>
<dbReference type="GO" id="GO:0005628">
    <property type="term" value="C:prospore membrane"/>
    <property type="evidence" value="ECO:0007669"/>
    <property type="project" value="EnsemblFungi"/>
</dbReference>
<dbReference type="GO" id="GO:0005275">
    <property type="term" value="F:amine transmembrane transporter activity"/>
    <property type="evidence" value="ECO:0007669"/>
    <property type="project" value="EnsemblFungi"/>
</dbReference>
<dbReference type="GO" id="GO:0030476">
    <property type="term" value="P:ascospore wall assembly"/>
    <property type="evidence" value="ECO:0007669"/>
    <property type="project" value="EnsemblFungi"/>
</dbReference>
<dbReference type="GO" id="GO:0006847">
    <property type="term" value="P:plasma membrane acetate transport"/>
    <property type="evidence" value="ECO:0000315"/>
    <property type="project" value="CGD"/>
</dbReference>
<dbReference type="CDD" id="cd17323">
    <property type="entry name" value="MFS_Tpo1_MDR_like"/>
    <property type="match status" value="1"/>
</dbReference>
<dbReference type="FunFam" id="1.20.1720.10:FF:000009">
    <property type="entry name" value="MFS multidrug transporter"/>
    <property type="match status" value="1"/>
</dbReference>
<dbReference type="Gene3D" id="1.20.1250.20">
    <property type="entry name" value="MFS general substrate transporter like domains"/>
    <property type="match status" value="1"/>
</dbReference>
<dbReference type="Gene3D" id="1.20.1720.10">
    <property type="entry name" value="Multidrug resistance protein D"/>
    <property type="match status" value="1"/>
</dbReference>
<dbReference type="InterPro" id="IPR011701">
    <property type="entry name" value="MFS"/>
</dbReference>
<dbReference type="InterPro" id="IPR020846">
    <property type="entry name" value="MFS_dom"/>
</dbReference>
<dbReference type="InterPro" id="IPR036259">
    <property type="entry name" value="MFS_trans_sf"/>
</dbReference>
<dbReference type="PANTHER" id="PTHR23502:SF21">
    <property type="entry name" value="DITYROSINE TRANSPORTER 1"/>
    <property type="match status" value="1"/>
</dbReference>
<dbReference type="PANTHER" id="PTHR23502">
    <property type="entry name" value="MAJOR FACILITATOR SUPERFAMILY"/>
    <property type="match status" value="1"/>
</dbReference>
<dbReference type="Pfam" id="PF07690">
    <property type="entry name" value="MFS_1"/>
    <property type="match status" value="1"/>
</dbReference>
<dbReference type="SUPFAM" id="SSF103473">
    <property type="entry name" value="MFS general substrate transporter"/>
    <property type="match status" value="1"/>
</dbReference>
<dbReference type="PROSITE" id="PS50850">
    <property type="entry name" value="MFS"/>
    <property type="match status" value="1"/>
</dbReference>
<protein>
    <recommendedName>
        <fullName evidence="4">Multidrug transporter DTR1</fullName>
    </recommendedName>
    <alternativeName>
        <fullName evidence="4">Acetic acid exporter DTR1</fullName>
    </alternativeName>
    <alternativeName>
        <fullName evidence="4">Drug:H(+) antiporter DTR1</fullName>
        <shortName evidence="4">DHA DTR1</shortName>
    </alternativeName>
</protein>
<proteinExistence type="evidence at transcript level"/>